<sequence>MRRGERRDAGGPRPESPVPAGRASLEEPPDGPSAGQATGPGEGRRSTESEVYDDGTNTFFWRAHTLTVLFILTCTLGYVTLLEETPQDTAYNTKRGIVASILVFLCFGVTQAKDGPFSRPHPAYWRFWLCVSVVYELFLIFILFQTVQDGRQFLKYVDPKLGVPLPERDYGGNCLIYDPDNETDPFHNIWDKLDGFVPAHFLGWYLKTLMIRDWWMCMIISVMFEFLEYSLEHQLPNFSECWWDHWIMDVLVCNGLGIYCGMKTLEWLSLKTYKWQGLWNIPTYKGKMKRIAFQFTPYSWVRFEWKPASSLRRWLAVCGIILVFLLAELNTFYLKFVLWMPPEHYLVLLRLVFFVNVGGVAMREIYDFMDDPKPHKKLGPQAWLVAAITATELLIVVKYDPHTLTLSLPFYISQCWTLGSVLALTWTVWRFFLRDITLRYKETRWQKWQNKDDQGSTVGNGDQHPLGLDEDLLGPGVAEGEGAPTPN</sequence>
<evidence type="ECO:0000250" key="1">
    <source>
        <dbReference type="UniProtKB" id="Q9Z1X2"/>
    </source>
</evidence>
<evidence type="ECO:0000255" key="2"/>
<evidence type="ECO:0000256" key="3">
    <source>
        <dbReference type="SAM" id="MobiDB-lite"/>
    </source>
</evidence>
<evidence type="ECO:0000269" key="4">
    <source>
    </source>
</evidence>
<evidence type="ECO:0000269" key="5">
    <source>
    </source>
</evidence>
<evidence type="ECO:0000305" key="6"/>
<evidence type="ECO:0000305" key="7">
    <source>
    </source>
</evidence>
<evidence type="ECO:0007744" key="8">
    <source>
    </source>
</evidence>
<evidence type="ECO:0007744" key="9">
    <source>
    </source>
</evidence>
<evidence type="ECO:0007744" key="10">
    <source>
    </source>
</evidence>
<evidence type="ECO:0007744" key="11">
    <source>
    </source>
</evidence>
<evidence type="ECO:0007744" key="12">
    <source>
    </source>
</evidence>
<evidence type="ECO:0007744" key="13">
    <source>
    </source>
</evidence>
<evidence type="ECO:0007744" key="14">
    <source>
    </source>
</evidence>
<evidence type="ECO:0007744" key="15">
    <source>
    </source>
</evidence>
<reference key="1">
    <citation type="journal article" date="2007" name="BMC Genomics">
        <title>The full-ORF clone resource of the German cDNA consortium.</title>
        <authorList>
            <person name="Bechtel S."/>
            <person name="Rosenfelder H."/>
            <person name="Duda A."/>
            <person name="Schmidt C.P."/>
            <person name="Ernst U."/>
            <person name="Wellenreuther R."/>
            <person name="Mehrle A."/>
            <person name="Schuster C."/>
            <person name="Bahr A."/>
            <person name="Bloecker H."/>
            <person name="Heubner D."/>
            <person name="Hoerlein A."/>
            <person name="Michel G."/>
            <person name="Wedler H."/>
            <person name="Koehrer K."/>
            <person name="Ottenwaelder B."/>
            <person name="Poustka A."/>
            <person name="Wiemann S."/>
            <person name="Schupp I."/>
        </authorList>
    </citation>
    <scope>NUCLEOTIDE SEQUENCE [LARGE SCALE MRNA]</scope>
    <source>
        <tissue>Brain</tissue>
    </source>
</reference>
<reference key="2">
    <citation type="journal article" date="2006" name="Nature">
        <title>DNA sequence and analysis of human chromosome 8.</title>
        <authorList>
            <person name="Nusbaum C."/>
            <person name="Mikkelsen T.S."/>
            <person name="Zody M.C."/>
            <person name="Asakawa S."/>
            <person name="Taudien S."/>
            <person name="Garber M."/>
            <person name="Kodira C.D."/>
            <person name="Schueler M.G."/>
            <person name="Shimizu A."/>
            <person name="Whittaker C.A."/>
            <person name="Chang J.L."/>
            <person name="Cuomo C.A."/>
            <person name="Dewar K."/>
            <person name="FitzGerald M.G."/>
            <person name="Yang X."/>
            <person name="Allen N.R."/>
            <person name="Anderson S."/>
            <person name="Asakawa T."/>
            <person name="Blechschmidt K."/>
            <person name="Bloom T."/>
            <person name="Borowsky M.L."/>
            <person name="Butler J."/>
            <person name="Cook A."/>
            <person name="Corum B."/>
            <person name="DeArellano K."/>
            <person name="DeCaprio D."/>
            <person name="Dooley K.T."/>
            <person name="Dorris L. III"/>
            <person name="Engels R."/>
            <person name="Gloeckner G."/>
            <person name="Hafez N."/>
            <person name="Hagopian D.S."/>
            <person name="Hall J.L."/>
            <person name="Ishikawa S.K."/>
            <person name="Jaffe D.B."/>
            <person name="Kamat A."/>
            <person name="Kudoh J."/>
            <person name="Lehmann R."/>
            <person name="Lokitsang T."/>
            <person name="Macdonald P."/>
            <person name="Major J.E."/>
            <person name="Matthews C.D."/>
            <person name="Mauceli E."/>
            <person name="Menzel U."/>
            <person name="Mihalev A.H."/>
            <person name="Minoshima S."/>
            <person name="Murayama Y."/>
            <person name="Naylor J.W."/>
            <person name="Nicol R."/>
            <person name="Nguyen C."/>
            <person name="O'Leary S.B."/>
            <person name="O'Neill K."/>
            <person name="Parker S.C.J."/>
            <person name="Polley A."/>
            <person name="Raymond C.K."/>
            <person name="Reichwald K."/>
            <person name="Rodriguez J."/>
            <person name="Sasaki T."/>
            <person name="Schilhabel M."/>
            <person name="Siddiqui R."/>
            <person name="Smith C.L."/>
            <person name="Sneddon T.P."/>
            <person name="Talamas J.A."/>
            <person name="Tenzin P."/>
            <person name="Topham K."/>
            <person name="Venkataraman V."/>
            <person name="Wen G."/>
            <person name="Yamazaki S."/>
            <person name="Young S.K."/>
            <person name="Zeng Q."/>
            <person name="Zimmer A.R."/>
            <person name="Rosenthal A."/>
            <person name="Birren B.W."/>
            <person name="Platzer M."/>
            <person name="Shimizu N."/>
            <person name="Lander E.S."/>
        </authorList>
    </citation>
    <scope>NUCLEOTIDE SEQUENCE [LARGE SCALE GENOMIC DNA]</scope>
</reference>
<reference key="3">
    <citation type="journal article" date="2004" name="Genome Res.">
        <title>The status, quality, and expansion of the NIH full-length cDNA project: the Mammalian Gene Collection (MGC).</title>
        <authorList>
            <consortium name="The MGC Project Team"/>
        </authorList>
    </citation>
    <scope>NUCLEOTIDE SEQUENCE [LARGE SCALE MRNA]</scope>
    <source>
        <tissue>Brain</tissue>
    </source>
</reference>
<reference key="4">
    <citation type="journal article" date="2006" name="Cell">
        <title>Global, in vivo, and site-specific phosphorylation dynamics in signaling networks.</title>
        <authorList>
            <person name="Olsen J.V."/>
            <person name="Blagoev B."/>
            <person name="Gnad F."/>
            <person name="Macek B."/>
            <person name="Kumar C."/>
            <person name="Mortensen P."/>
            <person name="Mann M."/>
        </authorList>
    </citation>
    <scope>PHOSPHORYLATION [LARGE SCALE ANALYSIS] AT SER-16</scope>
    <scope>IDENTIFICATION BY MASS SPECTROMETRY [LARGE SCALE ANALYSIS]</scope>
    <source>
        <tissue>Cervix carcinoma</tissue>
    </source>
</reference>
<reference key="5">
    <citation type="journal article" date="2008" name="J. Proteome Res.">
        <title>Phosphoproteome of resting human platelets.</title>
        <authorList>
            <person name="Zahedi R.P."/>
            <person name="Lewandrowski U."/>
            <person name="Wiesner J."/>
            <person name="Wortelkamp S."/>
            <person name="Moebius J."/>
            <person name="Schuetz C."/>
            <person name="Walter U."/>
            <person name="Gambaryan S."/>
            <person name="Sickmann A."/>
        </authorList>
    </citation>
    <scope>PHOSPHORYLATION [LARGE SCALE ANALYSIS] AT SER-16</scope>
    <scope>IDENTIFICATION BY MASS SPECTROMETRY [LARGE SCALE ANALYSIS]</scope>
    <source>
        <tissue>Platelet</tissue>
    </source>
</reference>
<reference key="6">
    <citation type="journal article" date="2008" name="Mol. Cell">
        <title>Kinase-selective enrichment enables quantitative phosphoproteomics of the kinome across the cell cycle.</title>
        <authorList>
            <person name="Daub H."/>
            <person name="Olsen J.V."/>
            <person name="Bairlein M."/>
            <person name="Gnad F."/>
            <person name="Oppermann F.S."/>
            <person name="Korner R."/>
            <person name="Greff Z."/>
            <person name="Keri G."/>
            <person name="Stemmann O."/>
            <person name="Mann M."/>
        </authorList>
    </citation>
    <scope>PHOSPHORYLATION [LARGE SCALE ANALYSIS] AT SER-16 AND THR-485</scope>
    <scope>IDENTIFICATION BY MASS SPECTROMETRY [LARGE SCALE ANALYSIS]</scope>
    <source>
        <tissue>Cervix carcinoma</tissue>
    </source>
</reference>
<reference key="7">
    <citation type="journal article" date="2008" name="Proc. Natl. Acad. Sci. U.S.A.">
        <title>A quantitative atlas of mitotic phosphorylation.</title>
        <authorList>
            <person name="Dephoure N."/>
            <person name="Zhou C."/>
            <person name="Villen J."/>
            <person name="Beausoleil S.A."/>
            <person name="Bakalarski C.E."/>
            <person name="Elledge S.J."/>
            <person name="Gygi S.P."/>
        </authorList>
    </citation>
    <scope>IDENTIFICATION BY MASS SPECTROMETRY [LARGE SCALE ANALYSIS]</scope>
    <source>
        <tissue>Cervix carcinoma</tissue>
    </source>
</reference>
<reference key="8">
    <citation type="journal article" date="2009" name="Biochem. J.">
        <title>Purification and characterization of human phosphatidylserine synthases 1 and 2.</title>
        <authorList>
            <person name="Tomohiro S."/>
            <person name="Kawaguti A."/>
            <person name="Kawabe Y."/>
            <person name="Kitada S."/>
            <person name="Kuge O."/>
        </authorList>
    </citation>
    <scope>FUNCTION</scope>
    <scope>CATALYTIC ACTIVITY</scope>
    <scope>SUBSTRATE SPECIFICITY</scope>
    <scope>ACTIVITY REGULATION</scope>
    <scope>BIOPHYSICOCHEMICAL PROPERTIES</scope>
</reference>
<reference key="9">
    <citation type="journal article" date="2009" name="J. Proteome Res.">
        <title>Glycoproteomics analysis of human liver tissue by combination of multiple enzyme digestion and hydrazide chemistry.</title>
        <authorList>
            <person name="Chen R."/>
            <person name="Jiang X."/>
            <person name="Sun D."/>
            <person name="Han G."/>
            <person name="Wang F."/>
            <person name="Ye M."/>
            <person name="Wang L."/>
            <person name="Zou H."/>
        </authorList>
    </citation>
    <scope>GLYCOSYLATION [LARGE SCALE ANALYSIS] AT ASN-181</scope>
    <source>
        <tissue>Liver</tissue>
    </source>
</reference>
<reference key="10">
    <citation type="journal article" date="2009" name="Mol. Cell. Proteomics">
        <title>Large-scale proteomics analysis of the human kinome.</title>
        <authorList>
            <person name="Oppermann F.S."/>
            <person name="Gnad F."/>
            <person name="Olsen J.V."/>
            <person name="Hornberger R."/>
            <person name="Greff Z."/>
            <person name="Keri G."/>
            <person name="Mann M."/>
            <person name="Daub H."/>
        </authorList>
    </citation>
    <scope>PHOSPHORYLATION [LARGE SCALE ANALYSIS] AT SER-16</scope>
    <scope>IDENTIFICATION BY MASS SPECTROMETRY [LARGE SCALE ANALYSIS]</scope>
</reference>
<reference key="11">
    <citation type="journal article" date="2010" name="Sci. Signal.">
        <title>Quantitative phosphoproteomics reveals widespread full phosphorylation site occupancy during mitosis.</title>
        <authorList>
            <person name="Olsen J.V."/>
            <person name="Vermeulen M."/>
            <person name="Santamaria A."/>
            <person name="Kumar C."/>
            <person name="Miller M.L."/>
            <person name="Jensen L.J."/>
            <person name="Gnad F."/>
            <person name="Cox J."/>
            <person name="Jensen T.S."/>
            <person name="Nigg E.A."/>
            <person name="Brunak S."/>
            <person name="Mann M."/>
        </authorList>
    </citation>
    <scope>PHOSPHORYLATION [LARGE SCALE ANALYSIS] AT SER-16</scope>
    <scope>IDENTIFICATION BY MASS SPECTROMETRY [LARGE SCALE ANALYSIS]</scope>
    <source>
        <tissue>Cervix carcinoma</tissue>
    </source>
</reference>
<reference key="12">
    <citation type="journal article" date="2011" name="Sci. Signal.">
        <title>System-wide temporal characterization of the proteome and phosphoproteome of human embryonic stem cell differentiation.</title>
        <authorList>
            <person name="Rigbolt K.T."/>
            <person name="Prokhorova T.A."/>
            <person name="Akimov V."/>
            <person name="Henningsen J."/>
            <person name="Johansen P.T."/>
            <person name="Kratchmarova I."/>
            <person name="Kassem M."/>
            <person name="Mann M."/>
            <person name="Olsen J.V."/>
            <person name="Blagoev B."/>
        </authorList>
    </citation>
    <scope>PHOSPHORYLATION [LARGE SCALE ANALYSIS] AT SER-16</scope>
    <scope>IDENTIFICATION BY MASS SPECTROMETRY [LARGE SCALE ANALYSIS]</scope>
</reference>
<reference key="13">
    <citation type="journal article" date="2013" name="J. Proteome Res.">
        <title>Toward a comprehensive characterization of a human cancer cell phosphoproteome.</title>
        <authorList>
            <person name="Zhou H."/>
            <person name="Di Palma S."/>
            <person name="Preisinger C."/>
            <person name="Peng M."/>
            <person name="Polat A.N."/>
            <person name="Heck A.J."/>
            <person name="Mohammed S."/>
        </authorList>
    </citation>
    <scope>PHOSPHORYLATION [LARGE SCALE ANALYSIS] AT SER-16</scope>
    <scope>IDENTIFICATION BY MASS SPECTROMETRY [LARGE SCALE ANALYSIS]</scope>
    <source>
        <tissue>Cervix carcinoma</tissue>
        <tissue>Erythroleukemia</tissue>
    </source>
</reference>
<reference key="14">
    <citation type="journal article" date="2014" name="J. Proteomics">
        <title>An enzyme assisted RP-RPLC approach for in-depth analysis of human liver phosphoproteome.</title>
        <authorList>
            <person name="Bian Y."/>
            <person name="Song C."/>
            <person name="Cheng K."/>
            <person name="Dong M."/>
            <person name="Wang F."/>
            <person name="Huang J."/>
            <person name="Sun D."/>
            <person name="Wang L."/>
            <person name="Ye M."/>
            <person name="Zou H."/>
        </authorList>
    </citation>
    <scope>PHOSPHORYLATION [LARGE SCALE ANALYSIS] AT SER-16 AND SER-24</scope>
    <scope>IDENTIFICATION BY MASS SPECTROMETRY [LARGE SCALE ANALYSIS]</scope>
    <source>
        <tissue>Liver</tissue>
    </source>
</reference>
<comment type="function">
    <text evidence="1 4">Catalyzes a base-exchange reaction in which the polar head group of phosphatidylethanolamine (PE) or phosphatidylcholine (PC) is replaced by L-serine (PubMed:19014349). Catalyzes the conversion of phosphatatidylethanolamine and does not act on phosphatidylcholine (PubMed:19014349). Can utilize both phosphatidylethanolamine (PE) plasmalogen and diacyl PE as substrate and the latter is six times better utilized, indicating the importance of an ester linkage at the sn-1 position (By similarity). Although it shows no sn-1 fatty acyl preference, exhibits significant preference towards docosahexaenoic acid (22:6n-3) compared with 18:1 or 20:4 at the sn-2 position (By similarity).</text>
</comment>
<comment type="catalytic activity">
    <reaction evidence="4">
        <text>a 1,2-diacyl-sn-glycero-3-phosphoethanolamine + L-serine = a 1,2-diacyl-sn-glycero-3-phospho-L-serine + ethanolamine</text>
        <dbReference type="Rhea" id="RHEA:27606"/>
        <dbReference type="ChEBI" id="CHEBI:33384"/>
        <dbReference type="ChEBI" id="CHEBI:57262"/>
        <dbReference type="ChEBI" id="CHEBI:57603"/>
        <dbReference type="ChEBI" id="CHEBI:64612"/>
        <dbReference type="EC" id="2.7.8.29"/>
    </reaction>
    <physiologicalReaction direction="left-to-right" evidence="7">
        <dbReference type="Rhea" id="RHEA:27607"/>
    </physiologicalReaction>
</comment>
<comment type="catalytic activity">
    <reaction evidence="1">
        <text>1-hexadecanoyl-2-(9Z-octadecenoyl)-sn-glycero-3-phosphoethanolamine + L-serine = 1-hexadecanoyl-2-(9Z-octadecenoyl)-sn-glycero-3-phospho-L-serine + ethanolamine</text>
        <dbReference type="Rhea" id="RHEA:41484"/>
        <dbReference type="ChEBI" id="CHEBI:33384"/>
        <dbReference type="ChEBI" id="CHEBI:57603"/>
        <dbReference type="ChEBI" id="CHEBI:73007"/>
        <dbReference type="ChEBI" id="CHEBI:75029"/>
    </reaction>
    <physiologicalReaction direction="left-to-right" evidence="1">
        <dbReference type="Rhea" id="RHEA:41485"/>
    </physiologicalReaction>
</comment>
<comment type="catalytic activity">
    <reaction evidence="1">
        <text>1-hexadecanoyl-2-(4Z,7Z,10Z,13Z,16Z,19Z-docosahexaenoyl)-sn-glycero-3-phosphoethanolamine + L-serine = 1-hexadecanoyl-2-(4Z,7Z,10Z,13Z,16Z,19Z-docosahexaenoyl)-sn-glycero-3-phosphoserine + ethanolamine</text>
        <dbReference type="Rhea" id="RHEA:41488"/>
        <dbReference type="ChEBI" id="CHEBI:33384"/>
        <dbReference type="ChEBI" id="CHEBI:57603"/>
        <dbReference type="ChEBI" id="CHEBI:78261"/>
        <dbReference type="ChEBI" id="CHEBI:78262"/>
    </reaction>
    <physiologicalReaction direction="left-to-right" evidence="1">
        <dbReference type="Rhea" id="RHEA:41489"/>
    </physiologicalReaction>
</comment>
<comment type="catalytic activity">
    <reaction evidence="1">
        <text>1-octadecanoyl-2-(5Z,8Z,11Z,14Z)-eicosatetraenoyl-sn-glycero-3-phosphoethanolamine + L-serine = 1-octadecanoyl-2-(5Z,8Z,11Z,14Z)-eicosatetraenoyl-sn-glycero-3-phosphoserine + ethanolamine</text>
        <dbReference type="Rhea" id="RHEA:41500"/>
        <dbReference type="ChEBI" id="CHEBI:33384"/>
        <dbReference type="ChEBI" id="CHEBI:57603"/>
        <dbReference type="ChEBI" id="CHEBI:78268"/>
        <dbReference type="ChEBI" id="CHEBI:78269"/>
    </reaction>
    <physiologicalReaction direction="left-to-right" evidence="1">
        <dbReference type="Rhea" id="RHEA:41501"/>
    </physiologicalReaction>
</comment>
<comment type="catalytic activity">
    <reaction evidence="1">
        <text>1-octadecanoyl-2-(4Z,7Z,10Z,13Z,16Z,19Z-docosahexaenoyl)-sn-glycero-3-phosphoethanolamine + L-serine = 1-octadecanoyl-2-(4Z,7Z,10Z,13Z,16Z,19Z-docosahexaenoyl)-sn-glycero-3-phosphoserine + ethanolamine</text>
        <dbReference type="Rhea" id="RHEA:41492"/>
        <dbReference type="ChEBI" id="CHEBI:33384"/>
        <dbReference type="ChEBI" id="CHEBI:57603"/>
        <dbReference type="ChEBI" id="CHEBI:78265"/>
        <dbReference type="ChEBI" id="CHEBI:78266"/>
    </reaction>
    <physiologicalReaction direction="left-to-right" evidence="1">
        <dbReference type="Rhea" id="RHEA:41493"/>
    </physiologicalReaction>
</comment>
<comment type="catalytic activity">
    <reaction evidence="1">
        <text>1-(1Z-octadecenyl)-2-(4Z,7Z,10Z,13Z,16Z,19Z-docosahexaenoyl)-sn-glycero-3-phosphoethanolamine + L-serine = 1-(1Z-octadecenyl)-2-(4Z,7Z,10Z,13Z,16Z,19Z-docosahexaenoyl)-sn-glycero-3-phospho-L-serine + ethanolamine</text>
        <dbReference type="Rhea" id="RHEA:41496"/>
        <dbReference type="ChEBI" id="CHEBI:33384"/>
        <dbReference type="ChEBI" id="CHEBI:57603"/>
        <dbReference type="ChEBI" id="CHEBI:78263"/>
        <dbReference type="ChEBI" id="CHEBI:78264"/>
    </reaction>
    <physiologicalReaction direction="left-to-right" evidence="1">
        <dbReference type="Rhea" id="RHEA:41497"/>
    </physiologicalReaction>
</comment>
<comment type="catalytic activity">
    <reaction evidence="1">
        <text>1-octadecanoyl-2-(9Z-octadecenoyl)-sn-glycero-3-phosphoethanolamine + L-serine = 1-octadecanoyl-2-(9Z-octadecenoyl)-sn-glycero-3-phospho-L-serine + ethanolamine</text>
        <dbReference type="Rhea" id="RHEA:40795"/>
        <dbReference type="ChEBI" id="CHEBI:33384"/>
        <dbReference type="ChEBI" id="CHEBI:57603"/>
        <dbReference type="ChEBI" id="CHEBI:75038"/>
        <dbReference type="ChEBI" id="CHEBI:78260"/>
    </reaction>
    <physiologicalReaction direction="left-to-right" evidence="1">
        <dbReference type="Rhea" id="RHEA:40796"/>
    </physiologicalReaction>
</comment>
<comment type="catalytic activity">
    <reaction evidence="1">
        <text>1-(1Z-octadecenyl)-2-(9Z-octadecenoyl)-sn-glycero-3-phosphoethanolamine + L-serine = 1-(1Z-octadecenyl)-2-(9Z-octadecenoyl)-sn-glycero-3-phospho-L-serine + ethanolamine</text>
        <dbReference type="Rhea" id="RHEA:41600"/>
        <dbReference type="ChEBI" id="CHEBI:33384"/>
        <dbReference type="ChEBI" id="CHEBI:57603"/>
        <dbReference type="ChEBI" id="CHEBI:78340"/>
        <dbReference type="ChEBI" id="CHEBI:78341"/>
    </reaction>
    <physiologicalReaction direction="left-to-right" evidence="1">
        <dbReference type="Rhea" id="RHEA:41601"/>
    </physiologicalReaction>
</comment>
<comment type="catalytic activity">
    <reaction evidence="1">
        <text>1-(1Z-octadecenyl)-2-(5Z,8Z,11Z,14Z- eicosatetraenoyl)-sn-glycero-3-phosphoethanolamine + L-serine = 1-(1Z-octadecenyl)-2-(5Z,8Z,11Z,14Z-eicosatetraenoyl)-sn-glycero-3-phospho-L-serine + ethanolamine</text>
        <dbReference type="Rhea" id="RHEA:41604"/>
        <dbReference type="ChEBI" id="CHEBI:33384"/>
        <dbReference type="ChEBI" id="CHEBI:57603"/>
        <dbReference type="ChEBI" id="CHEBI:78342"/>
        <dbReference type="ChEBI" id="CHEBI:78343"/>
    </reaction>
    <physiologicalReaction direction="left-to-right" evidence="1">
        <dbReference type="Rhea" id="RHEA:41605"/>
    </physiologicalReaction>
</comment>
<comment type="activity regulation">
    <text evidence="4">Requires calcium ions (PubMed:19014349). Inhibited by exogenous phosphatidylserine (PubMed:19014349).</text>
</comment>
<comment type="biophysicochemical properties">
    <kinetics>
        <KM evidence="4">120 uM for serine (in the presence of 1 mM PE)</KM>
        <Vmax evidence="4">0.57 mmol/h/mg enzyme</Vmax>
    </kinetics>
    <phDependence>
        <text evidence="4">Optimum pH is around 7.5.</text>
    </phDependence>
</comment>
<comment type="pathway">
    <text>Phospholipid metabolism; phosphatidylserine biosynthesis.</text>
</comment>
<comment type="subcellular location">
    <subcellularLocation>
        <location evidence="1">Endoplasmic reticulum membrane</location>
        <topology evidence="2">Multi-pass membrane protein</topology>
    </subcellularLocation>
    <text evidence="1">Highly enriched in the mitochondria-associated membrane (MAM).</text>
</comment>
<comment type="similarity">
    <text evidence="6">Belongs to the phosphatidyl serine synthase family.</text>
</comment>
<accession>Q9BVG9</accession>
<gene>
    <name type="primary">PTDSS2</name>
    <name type="synonym">PSS2</name>
</gene>
<dbReference type="EC" id="2.7.8.29" evidence="4"/>
<dbReference type="EMBL" id="AL834357">
    <property type="protein sequence ID" value="CAD39022.1"/>
    <property type="molecule type" value="mRNA"/>
</dbReference>
<dbReference type="EMBL" id="AC137894">
    <property type="status" value="NOT_ANNOTATED_CDS"/>
    <property type="molecule type" value="Genomic_DNA"/>
</dbReference>
<dbReference type="EMBL" id="AC138230">
    <property type="status" value="NOT_ANNOTATED_CDS"/>
    <property type="molecule type" value="Genomic_DNA"/>
</dbReference>
<dbReference type="EMBL" id="BC001210">
    <property type="protein sequence ID" value="AAH01210.1"/>
    <property type="molecule type" value="mRNA"/>
</dbReference>
<dbReference type="CCDS" id="CCDS7696.1"/>
<dbReference type="RefSeq" id="NP_110410.1">
    <property type="nucleotide sequence ID" value="NM_030783.3"/>
</dbReference>
<dbReference type="SMR" id="Q9BVG9"/>
<dbReference type="BioGRID" id="123499">
    <property type="interactions" value="145"/>
</dbReference>
<dbReference type="FunCoup" id="Q9BVG9">
    <property type="interactions" value="868"/>
</dbReference>
<dbReference type="IntAct" id="Q9BVG9">
    <property type="interactions" value="75"/>
</dbReference>
<dbReference type="MINT" id="Q9BVG9"/>
<dbReference type="STRING" id="9606.ENSP00000308258"/>
<dbReference type="DrugBank" id="DB00144">
    <property type="generic name" value="Phosphatidyl serine"/>
</dbReference>
<dbReference type="SwissLipids" id="SLP:000001061"/>
<dbReference type="GlyConnect" id="1602">
    <property type="glycosylation" value="1 N-Linked glycan (1 site)"/>
</dbReference>
<dbReference type="GlyCosmos" id="Q9BVG9">
    <property type="glycosylation" value="1 site, 1 glycan"/>
</dbReference>
<dbReference type="GlyGen" id="Q9BVG9">
    <property type="glycosylation" value="1 site, 5 N-linked glycans (1 site)"/>
</dbReference>
<dbReference type="iPTMnet" id="Q9BVG9"/>
<dbReference type="PhosphoSitePlus" id="Q9BVG9"/>
<dbReference type="SwissPalm" id="Q9BVG9"/>
<dbReference type="BioMuta" id="PTDSS2"/>
<dbReference type="DMDM" id="49036457"/>
<dbReference type="jPOST" id="Q9BVG9"/>
<dbReference type="MassIVE" id="Q9BVG9"/>
<dbReference type="PaxDb" id="9606-ENSP00000308258"/>
<dbReference type="PeptideAtlas" id="Q9BVG9"/>
<dbReference type="ProteomicsDB" id="79205"/>
<dbReference type="Pumba" id="Q9BVG9"/>
<dbReference type="Antibodypedia" id="41975">
    <property type="antibodies" value="98 antibodies from 15 providers"/>
</dbReference>
<dbReference type="DNASU" id="81490"/>
<dbReference type="Ensembl" id="ENST00000308020.6">
    <property type="protein sequence ID" value="ENSP00000308258.5"/>
    <property type="gene ID" value="ENSG00000174915.12"/>
</dbReference>
<dbReference type="GeneID" id="81490"/>
<dbReference type="KEGG" id="hsa:81490"/>
<dbReference type="MANE-Select" id="ENST00000308020.6">
    <property type="protein sequence ID" value="ENSP00000308258.5"/>
    <property type="RefSeq nucleotide sequence ID" value="NM_030783.3"/>
    <property type="RefSeq protein sequence ID" value="NP_110410.1"/>
</dbReference>
<dbReference type="UCSC" id="uc001lpj.3">
    <property type="organism name" value="human"/>
</dbReference>
<dbReference type="AGR" id="HGNC:15463"/>
<dbReference type="CTD" id="81490"/>
<dbReference type="DisGeNET" id="81490"/>
<dbReference type="GeneCards" id="PTDSS2"/>
<dbReference type="HGNC" id="HGNC:15463">
    <property type="gene designation" value="PTDSS2"/>
</dbReference>
<dbReference type="HPA" id="ENSG00000174915">
    <property type="expression patterns" value="Low tissue specificity"/>
</dbReference>
<dbReference type="MIM" id="612793">
    <property type="type" value="gene"/>
</dbReference>
<dbReference type="neXtProt" id="NX_Q9BVG9"/>
<dbReference type="OpenTargets" id="ENSG00000174915"/>
<dbReference type="PharmGKB" id="PA33940"/>
<dbReference type="VEuPathDB" id="HostDB:ENSG00000174915"/>
<dbReference type="eggNOG" id="KOG2735">
    <property type="taxonomic scope" value="Eukaryota"/>
</dbReference>
<dbReference type="GeneTree" id="ENSGT00530000063576"/>
<dbReference type="HOGENOM" id="CLU_037661_4_1_1"/>
<dbReference type="InParanoid" id="Q9BVG9"/>
<dbReference type="OMA" id="QHVLPNF"/>
<dbReference type="OrthoDB" id="10265393at2759"/>
<dbReference type="PAN-GO" id="Q9BVG9">
    <property type="GO annotations" value="0 GO annotations based on evolutionary models"/>
</dbReference>
<dbReference type="PhylomeDB" id="Q9BVG9"/>
<dbReference type="TreeFam" id="TF300012"/>
<dbReference type="BioCyc" id="MetaCyc:HS10846-MONOMER"/>
<dbReference type="BRENDA" id="2.7.8.29">
    <property type="organism ID" value="2681"/>
</dbReference>
<dbReference type="PathwayCommons" id="Q9BVG9"/>
<dbReference type="Reactome" id="R-HSA-1483101">
    <property type="pathway name" value="Synthesis of PS"/>
</dbReference>
<dbReference type="SignaLink" id="Q9BVG9"/>
<dbReference type="UniPathway" id="UPA00948"/>
<dbReference type="BioGRID-ORCS" id="81490">
    <property type="hits" value="12 hits in 1159 CRISPR screens"/>
</dbReference>
<dbReference type="GenomeRNAi" id="81490"/>
<dbReference type="Pharos" id="Q9BVG9">
    <property type="development level" value="Tbio"/>
</dbReference>
<dbReference type="PRO" id="PR:Q9BVG9"/>
<dbReference type="Proteomes" id="UP000005640">
    <property type="component" value="Chromosome 11"/>
</dbReference>
<dbReference type="RNAct" id="Q9BVG9">
    <property type="molecule type" value="protein"/>
</dbReference>
<dbReference type="Bgee" id="ENSG00000174915">
    <property type="expression patterns" value="Expressed in left testis and 97 other cell types or tissues"/>
</dbReference>
<dbReference type="ExpressionAtlas" id="Q9BVG9">
    <property type="expression patterns" value="baseline and differential"/>
</dbReference>
<dbReference type="GO" id="GO:0005789">
    <property type="term" value="C:endoplasmic reticulum membrane"/>
    <property type="evidence" value="ECO:0000250"/>
    <property type="project" value="UniProtKB"/>
</dbReference>
<dbReference type="GO" id="GO:0016020">
    <property type="term" value="C:membrane"/>
    <property type="evidence" value="ECO:0000250"/>
    <property type="project" value="UniProtKB"/>
</dbReference>
<dbReference type="GO" id="GO:0003882">
    <property type="term" value="F:CDP-diacylglycerol-serine O-phosphatidyltransferase activity"/>
    <property type="evidence" value="ECO:0007669"/>
    <property type="project" value="Ensembl"/>
</dbReference>
<dbReference type="GO" id="GO:0106245">
    <property type="term" value="F:L-serine-phosphatidylethanolamine phosphatidyltransferase activity"/>
    <property type="evidence" value="ECO:0000314"/>
    <property type="project" value="FlyBase"/>
</dbReference>
<dbReference type="GO" id="GO:0016740">
    <property type="term" value="F:transferase activity"/>
    <property type="evidence" value="ECO:0000304"/>
    <property type="project" value="Reactome"/>
</dbReference>
<dbReference type="GO" id="GO:0006659">
    <property type="term" value="P:phosphatidylserine biosynthetic process"/>
    <property type="evidence" value="ECO:0000314"/>
    <property type="project" value="FlyBase"/>
</dbReference>
<dbReference type="InterPro" id="IPR004277">
    <property type="entry name" value="PSS"/>
</dbReference>
<dbReference type="PANTHER" id="PTHR15362">
    <property type="entry name" value="PHOSPHATIDYLINOSITOL SYNTHASE"/>
    <property type="match status" value="1"/>
</dbReference>
<dbReference type="PANTHER" id="PTHR15362:SF7">
    <property type="entry name" value="PHOSPHATIDYLSERINE SYNTHASE 2"/>
    <property type="match status" value="1"/>
</dbReference>
<dbReference type="Pfam" id="PF03034">
    <property type="entry name" value="PSS"/>
    <property type="match status" value="1"/>
</dbReference>
<feature type="chain" id="PRO_0000056832" description="Phosphatidylserine synthase 2">
    <location>
        <begin position="1"/>
        <end position="487"/>
    </location>
</feature>
<feature type="topological domain" description="Cytoplasmic" evidence="2">
    <location>
        <begin position="1"/>
        <end position="62"/>
    </location>
</feature>
<feature type="transmembrane region" description="Helical" evidence="2">
    <location>
        <begin position="63"/>
        <end position="83"/>
    </location>
</feature>
<feature type="topological domain" description="Lumenal" evidence="2">
    <location>
        <begin position="84"/>
        <end position="96"/>
    </location>
</feature>
<feature type="transmembrane region" description="Helical" evidence="2">
    <location>
        <begin position="97"/>
        <end position="117"/>
    </location>
</feature>
<feature type="topological domain" description="Cytoplasmic" evidence="2">
    <location>
        <begin position="118"/>
        <end position="126"/>
    </location>
</feature>
<feature type="transmembrane region" description="Helical" evidence="2">
    <location>
        <begin position="127"/>
        <end position="147"/>
    </location>
</feature>
<feature type="topological domain" description="Lumenal" evidence="2">
    <location>
        <begin position="148"/>
        <end position="313"/>
    </location>
</feature>
<feature type="transmembrane region" description="Helical" evidence="2">
    <location>
        <begin position="314"/>
        <end position="334"/>
    </location>
</feature>
<feature type="topological domain" description="Cytoplasmic" evidence="2">
    <location>
        <position position="335"/>
    </location>
</feature>
<feature type="transmembrane region" description="Helical" evidence="2">
    <location>
        <begin position="336"/>
        <end position="356"/>
    </location>
</feature>
<feature type="topological domain" description="Lumenal" evidence="2">
    <location>
        <begin position="357"/>
        <end position="376"/>
    </location>
</feature>
<feature type="transmembrane region" description="Helical" evidence="2">
    <location>
        <begin position="377"/>
        <end position="397"/>
    </location>
</feature>
<feature type="topological domain" description="Cytoplasmic" evidence="2">
    <location>
        <begin position="398"/>
        <end position="403"/>
    </location>
</feature>
<feature type="transmembrane region" description="Helical" evidence="2">
    <location>
        <begin position="404"/>
        <end position="424"/>
    </location>
</feature>
<feature type="topological domain" description="Lumenal" evidence="2">
    <location>
        <begin position="425"/>
        <end position="487"/>
    </location>
</feature>
<feature type="region of interest" description="Disordered" evidence="3">
    <location>
        <begin position="1"/>
        <end position="50"/>
    </location>
</feature>
<feature type="region of interest" description="Disordered" evidence="3">
    <location>
        <begin position="451"/>
        <end position="487"/>
    </location>
</feature>
<feature type="compositionally biased region" description="Basic and acidic residues" evidence="3">
    <location>
        <begin position="1"/>
        <end position="10"/>
    </location>
</feature>
<feature type="modified residue" description="Phosphoserine" evidence="8 9 10 11 12 13 14 15">
    <location>
        <position position="16"/>
    </location>
</feature>
<feature type="modified residue" description="Phosphoserine" evidence="15">
    <location>
        <position position="24"/>
    </location>
</feature>
<feature type="modified residue" description="Phosphothreonine" evidence="10">
    <location>
        <position position="485"/>
    </location>
</feature>
<feature type="glycosylation site" description="N-linked (GlcNAc...) asparagine" evidence="5">
    <location>
        <position position="181"/>
    </location>
</feature>
<organism>
    <name type="scientific">Homo sapiens</name>
    <name type="common">Human</name>
    <dbReference type="NCBI Taxonomy" id="9606"/>
    <lineage>
        <taxon>Eukaryota</taxon>
        <taxon>Metazoa</taxon>
        <taxon>Chordata</taxon>
        <taxon>Craniata</taxon>
        <taxon>Vertebrata</taxon>
        <taxon>Euteleostomi</taxon>
        <taxon>Mammalia</taxon>
        <taxon>Eutheria</taxon>
        <taxon>Euarchontoglires</taxon>
        <taxon>Primates</taxon>
        <taxon>Haplorrhini</taxon>
        <taxon>Catarrhini</taxon>
        <taxon>Hominidae</taxon>
        <taxon>Homo</taxon>
    </lineage>
</organism>
<name>PTSS2_HUMAN</name>
<keyword id="KW-0256">Endoplasmic reticulum</keyword>
<keyword id="KW-0325">Glycoprotein</keyword>
<keyword id="KW-0444">Lipid biosynthesis</keyword>
<keyword id="KW-0443">Lipid metabolism</keyword>
<keyword id="KW-0472">Membrane</keyword>
<keyword id="KW-0594">Phospholipid biosynthesis</keyword>
<keyword id="KW-1208">Phospholipid metabolism</keyword>
<keyword id="KW-0597">Phosphoprotein</keyword>
<keyword id="KW-1267">Proteomics identification</keyword>
<keyword id="KW-1185">Reference proteome</keyword>
<keyword id="KW-0808">Transferase</keyword>
<keyword id="KW-0812">Transmembrane</keyword>
<keyword id="KW-1133">Transmembrane helix</keyword>
<proteinExistence type="evidence at protein level"/>
<protein>
    <recommendedName>
        <fullName>Phosphatidylserine synthase 2</fullName>
        <shortName>PSS-2</shortName>
        <shortName>PtdSer synthase 2</shortName>
        <ecNumber evidence="4">2.7.8.29</ecNumber>
    </recommendedName>
    <alternativeName>
        <fullName>Serine-exchange enzyme II</fullName>
    </alternativeName>
</protein>